<sequence length="267" mass="28921">MNALLTNPFKERLCKGEVQIGLWLSSTTAYMAEIAATSGYDWLLIDGEHAPNTIQDLYHQLQAVAPYASQPVIRPVEGSKPLIKQVLDIGAQTLLLPMVDTADQARQVVSATRYPPYGERGVGASVARAARWGRIENYMAQVNDSLCLLVQVESKTALDNLDKILDVQGIDGVFIGPADLSASLGYPDNAGHLEVQRIIETSIRRIRDAGKAAGFLAVAPDMAQQCLAWGANFVAVGVDTMLYSDALDQRLAMFKSGKNGPRIKGSY</sequence>
<protein>
    <recommendedName>
        <fullName evidence="1">2-keto-3-deoxy-L-rhamnonate aldolase</fullName>
        <shortName evidence="1">KDR aldolase</shortName>
        <ecNumber evidence="1">4.1.2.53</ecNumber>
    </recommendedName>
    <alternativeName>
        <fullName evidence="1">2-dehydro-3-deoxyrhamnonate aldolase</fullName>
    </alternativeName>
</protein>
<gene>
    <name evidence="1" type="primary">rhmA</name>
    <name type="ordered locus">SDY_2440</name>
</gene>
<keyword id="KW-0456">Lyase</keyword>
<keyword id="KW-0460">Magnesium</keyword>
<keyword id="KW-0479">Metal-binding</keyword>
<keyword id="KW-1185">Reference proteome</keyword>
<feature type="chain" id="PRO_0000353179" description="2-keto-3-deoxy-L-rhamnonate aldolase">
    <location>
        <begin position="1"/>
        <end position="267"/>
    </location>
</feature>
<feature type="active site" description="Proton acceptor" evidence="1">
    <location>
        <position position="49"/>
    </location>
</feature>
<feature type="binding site" evidence="1">
    <location>
        <position position="151"/>
    </location>
    <ligand>
        <name>substrate</name>
    </ligand>
</feature>
<feature type="binding site" evidence="1">
    <location>
        <position position="153"/>
    </location>
    <ligand>
        <name>Mg(2+)</name>
        <dbReference type="ChEBI" id="CHEBI:18420"/>
    </ligand>
</feature>
<feature type="binding site" evidence="1">
    <location>
        <position position="178"/>
    </location>
    <ligand>
        <name>substrate</name>
    </ligand>
</feature>
<feature type="binding site" evidence="1">
    <location>
        <position position="179"/>
    </location>
    <ligand>
        <name>Mg(2+)</name>
        <dbReference type="ChEBI" id="CHEBI:18420"/>
    </ligand>
</feature>
<feature type="binding site" evidence="1">
    <location>
        <position position="179"/>
    </location>
    <ligand>
        <name>substrate</name>
    </ligand>
</feature>
<feature type="site" description="Transition state stabilizer" evidence="1">
    <location>
        <position position="74"/>
    </location>
</feature>
<feature type="site" description="Increases basicity of active site His" evidence="1">
    <location>
        <position position="88"/>
    </location>
</feature>
<proteinExistence type="inferred from homology"/>
<name>RHMA_SHIDS</name>
<reference key="1">
    <citation type="journal article" date="2005" name="Nucleic Acids Res.">
        <title>Genome dynamics and diversity of Shigella species, the etiologic agents of bacillary dysentery.</title>
        <authorList>
            <person name="Yang F."/>
            <person name="Yang J."/>
            <person name="Zhang X."/>
            <person name="Chen L."/>
            <person name="Jiang Y."/>
            <person name="Yan Y."/>
            <person name="Tang X."/>
            <person name="Wang J."/>
            <person name="Xiong Z."/>
            <person name="Dong J."/>
            <person name="Xue Y."/>
            <person name="Zhu Y."/>
            <person name="Xu X."/>
            <person name="Sun L."/>
            <person name="Chen S."/>
            <person name="Nie H."/>
            <person name="Peng J."/>
            <person name="Xu J."/>
            <person name="Wang Y."/>
            <person name="Yuan Z."/>
            <person name="Wen Y."/>
            <person name="Yao Z."/>
            <person name="Shen Y."/>
            <person name="Qiang B."/>
            <person name="Hou Y."/>
            <person name="Yu J."/>
            <person name="Jin Q."/>
        </authorList>
    </citation>
    <scope>NUCLEOTIDE SEQUENCE [LARGE SCALE GENOMIC DNA]</scope>
    <source>
        <strain>Sd197</strain>
    </source>
</reference>
<evidence type="ECO:0000255" key="1">
    <source>
        <dbReference type="HAMAP-Rule" id="MF_01290"/>
    </source>
</evidence>
<accession>Q32DU2</accession>
<dbReference type="EC" id="4.1.2.53" evidence="1"/>
<dbReference type="EMBL" id="CP000034">
    <property type="protein sequence ID" value="ABB62513.1"/>
    <property type="molecule type" value="Genomic_DNA"/>
</dbReference>
<dbReference type="RefSeq" id="WP_000992971.1">
    <property type="nucleotide sequence ID" value="NC_007606.1"/>
</dbReference>
<dbReference type="RefSeq" id="YP_404004.1">
    <property type="nucleotide sequence ID" value="NC_007606.1"/>
</dbReference>
<dbReference type="SMR" id="Q32DU2"/>
<dbReference type="STRING" id="300267.SDY_2440"/>
<dbReference type="EnsemblBacteria" id="ABB62513">
    <property type="protein sequence ID" value="ABB62513"/>
    <property type="gene ID" value="SDY_2440"/>
</dbReference>
<dbReference type="KEGG" id="sdy:SDY_2440"/>
<dbReference type="PATRIC" id="fig|300267.13.peg.2940"/>
<dbReference type="HOGENOM" id="CLU_059964_1_0_6"/>
<dbReference type="Proteomes" id="UP000002716">
    <property type="component" value="Chromosome"/>
</dbReference>
<dbReference type="GO" id="GO:0005737">
    <property type="term" value="C:cytoplasm"/>
    <property type="evidence" value="ECO:0007669"/>
    <property type="project" value="TreeGrafter"/>
</dbReference>
<dbReference type="GO" id="GO:0106099">
    <property type="term" value="F:2-keto-3-deoxy-L-rhamnonate aldolase activity"/>
    <property type="evidence" value="ECO:0007669"/>
    <property type="project" value="UniProtKB-EC"/>
</dbReference>
<dbReference type="GO" id="GO:0000287">
    <property type="term" value="F:magnesium ion binding"/>
    <property type="evidence" value="ECO:0007669"/>
    <property type="project" value="UniProtKB-UniRule"/>
</dbReference>
<dbReference type="FunFam" id="3.20.20.60:FF:000004">
    <property type="entry name" value="5-keto-4-deoxy-D-glucarate aldolase"/>
    <property type="match status" value="1"/>
</dbReference>
<dbReference type="Gene3D" id="3.20.20.60">
    <property type="entry name" value="Phosphoenolpyruvate-binding domains"/>
    <property type="match status" value="1"/>
</dbReference>
<dbReference type="HAMAP" id="MF_01290">
    <property type="entry name" value="KDR_aldolase"/>
    <property type="match status" value="1"/>
</dbReference>
<dbReference type="InterPro" id="IPR005000">
    <property type="entry name" value="Aldolase/citrate-lyase_domain"/>
</dbReference>
<dbReference type="InterPro" id="IPR050251">
    <property type="entry name" value="HpcH-HpaI_aldolase"/>
</dbReference>
<dbReference type="InterPro" id="IPR023593">
    <property type="entry name" value="KDR_aldolase"/>
</dbReference>
<dbReference type="InterPro" id="IPR015813">
    <property type="entry name" value="Pyrv/PenolPyrv_kinase-like_dom"/>
</dbReference>
<dbReference type="InterPro" id="IPR040442">
    <property type="entry name" value="Pyrv_kinase-like_dom_sf"/>
</dbReference>
<dbReference type="NCBIfam" id="NF007521">
    <property type="entry name" value="PRK10128.1"/>
    <property type="match status" value="1"/>
</dbReference>
<dbReference type="PANTHER" id="PTHR30502">
    <property type="entry name" value="2-KETO-3-DEOXY-L-RHAMNONATE ALDOLASE"/>
    <property type="match status" value="1"/>
</dbReference>
<dbReference type="PANTHER" id="PTHR30502:SF5">
    <property type="entry name" value="2-KETO-3-DEOXY-L-RHAMNONATE ALDOLASE"/>
    <property type="match status" value="1"/>
</dbReference>
<dbReference type="Pfam" id="PF03328">
    <property type="entry name" value="HpcH_HpaI"/>
    <property type="match status" value="1"/>
</dbReference>
<dbReference type="SUPFAM" id="SSF51621">
    <property type="entry name" value="Phosphoenolpyruvate/pyruvate domain"/>
    <property type="match status" value="1"/>
</dbReference>
<organism>
    <name type="scientific">Shigella dysenteriae serotype 1 (strain Sd197)</name>
    <dbReference type="NCBI Taxonomy" id="300267"/>
    <lineage>
        <taxon>Bacteria</taxon>
        <taxon>Pseudomonadati</taxon>
        <taxon>Pseudomonadota</taxon>
        <taxon>Gammaproteobacteria</taxon>
        <taxon>Enterobacterales</taxon>
        <taxon>Enterobacteriaceae</taxon>
        <taxon>Shigella</taxon>
    </lineage>
</organism>
<comment type="function">
    <text evidence="1">Catalyzes the reversible retro-aldol cleavage of 2-keto-3-deoxy-L-rhamnonate (KDR) to pyruvate and lactaldehyde.</text>
</comment>
<comment type="catalytic activity">
    <reaction evidence="1">
        <text>2-dehydro-3-deoxy-L-rhamnonate = (S)-lactaldehyde + pyruvate</text>
        <dbReference type="Rhea" id="RHEA:25784"/>
        <dbReference type="ChEBI" id="CHEBI:15361"/>
        <dbReference type="ChEBI" id="CHEBI:18041"/>
        <dbReference type="ChEBI" id="CHEBI:58371"/>
        <dbReference type="EC" id="4.1.2.53"/>
    </reaction>
</comment>
<comment type="cofactor">
    <cofactor evidence="1">
        <name>Mg(2+)</name>
        <dbReference type="ChEBI" id="CHEBI:18420"/>
    </cofactor>
    <text evidence="1">Binds 1 Mg(2+) ion per subunit.</text>
</comment>
<comment type="subunit">
    <text evidence="1">Homohexamer.</text>
</comment>
<comment type="similarity">
    <text evidence="1">Belongs to the HpcH/HpaI aldolase family. KDR aldolase subfamily.</text>
</comment>